<name>RL44_KLULA</name>
<accession>P31027</accession>
<comment type="miscellaneous">
    <text>Confers resistance to cycloheximide, an inhibitor of polypeptide elongation.</text>
</comment>
<comment type="similarity">
    <text evidence="2">Belongs to the eukaryotic ribosomal protein eL42 family.</text>
</comment>
<protein>
    <recommendedName>
        <fullName evidence="2">Large ribosomal subunit protein eL42</fullName>
    </recommendedName>
    <alternativeName>
        <fullName>60S ribosomal protein L41</fullName>
    </alternativeName>
    <alternativeName>
        <fullName>60S ribosomal protein L44</fullName>
    </alternativeName>
</protein>
<evidence type="ECO:0000250" key="1"/>
<evidence type="ECO:0000305" key="2"/>
<proteinExistence type="evidence at protein level"/>
<sequence>MVNVPKTRKTYCKGKECRKHAQHKVTQYKAGKASLYAQGKRRYDRKQSGFGGQTKQIFHKKAKTTKKVVLRLECMSCKTKTQLALKRCKHFELGGEKKQKGQALQF</sequence>
<reference key="1">
    <citation type="journal article" date="1993" name="Eur. J. Biochem.">
        <title>Natural cycloheximide resistance in yeast. The role of ribosomal protein L41.</title>
        <authorList>
            <person name="Dehoux P."/>
            <person name="Davies J."/>
            <person name="Cannon M."/>
        </authorList>
    </citation>
    <scope>NUCLEOTIDE SEQUENCE [GENOMIC DNA]</scope>
</reference>
<reference key="2">
    <citation type="journal article" date="2004" name="Nature">
        <title>Genome evolution in yeasts.</title>
        <authorList>
            <person name="Dujon B."/>
            <person name="Sherman D."/>
            <person name="Fischer G."/>
            <person name="Durrens P."/>
            <person name="Casaregola S."/>
            <person name="Lafontaine I."/>
            <person name="de Montigny J."/>
            <person name="Marck C."/>
            <person name="Neuveglise C."/>
            <person name="Talla E."/>
            <person name="Goffard N."/>
            <person name="Frangeul L."/>
            <person name="Aigle M."/>
            <person name="Anthouard V."/>
            <person name="Babour A."/>
            <person name="Barbe V."/>
            <person name="Barnay S."/>
            <person name="Blanchin S."/>
            <person name="Beckerich J.-M."/>
            <person name="Beyne E."/>
            <person name="Bleykasten C."/>
            <person name="Boisrame A."/>
            <person name="Boyer J."/>
            <person name="Cattolico L."/>
            <person name="Confanioleri F."/>
            <person name="de Daruvar A."/>
            <person name="Despons L."/>
            <person name="Fabre E."/>
            <person name="Fairhead C."/>
            <person name="Ferry-Dumazet H."/>
            <person name="Groppi A."/>
            <person name="Hantraye F."/>
            <person name="Hennequin C."/>
            <person name="Jauniaux N."/>
            <person name="Joyet P."/>
            <person name="Kachouri R."/>
            <person name="Kerrest A."/>
            <person name="Koszul R."/>
            <person name="Lemaire M."/>
            <person name="Lesur I."/>
            <person name="Ma L."/>
            <person name="Muller H."/>
            <person name="Nicaud J.-M."/>
            <person name="Nikolski M."/>
            <person name="Oztas S."/>
            <person name="Ozier-Kalogeropoulos O."/>
            <person name="Pellenz S."/>
            <person name="Potier S."/>
            <person name="Richard G.-F."/>
            <person name="Straub M.-L."/>
            <person name="Suleau A."/>
            <person name="Swennen D."/>
            <person name="Tekaia F."/>
            <person name="Wesolowski-Louvel M."/>
            <person name="Westhof E."/>
            <person name="Wirth B."/>
            <person name="Zeniou-Meyer M."/>
            <person name="Zivanovic Y."/>
            <person name="Bolotin-Fukuhara M."/>
            <person name="Thierry A."/>
            <person name="Bouchier C."/>
            <person name="Caudron B."/>
            <person name="Scarpelli C."/>
            <person name="Gaillardin C."/>
            <person name="Weissenbach J."/>
            <person name="Wincker P."/>
            <person name="Souciet J.-L."/>
        </authorList>
    </citation>
    <scope>NUCLEOTIDE SEQUENCE [LARGE SCALE GENOMIC DNA]</scope>
    <source>
        <strain>ATCC 8585 / CBS 2359 / DSM 70799 / NBRC 1267 / NRRL Y-1140 / WM37</strain>
    </source>
</reference>
<dbReference type="EMBL" id="M94988">
    <property type="protein sequence ID" value="AAA35262.1"/>
    <property type="molecule type" value="Genomic_DNA"/>
</dbReference>
<dbReference type="EMBL" id="CR382124">
    <property type="protein sequence ID" value="CAH00508.1"/>
    <property type="molecule type" value="Genomic_DNA"/>
</dbReference>
<dbReference type="PIR" id="S32478">
    <property type="entry name" value="S32478"/>
</dbReference>
<dbReference type="RefSeq" id="XP_453412.1">
    <property type="nucleotide sequence ID" value="XM_453412.1"/>
</dbReference>
<dbReference type="PDB" id="5IT7">
    <property type="method" value="EM"/>
    <property type="resolution" value="3.60 A"/>
    <property type="chains" value="oo=2-102"/>
</dbReference>
<dbReference type="PDB" id="6UZ7">
    <property type="method" value="EM"/>
    <property type="resolution" value="3.60 A"/>
    <property type="chains" value="Bo=1-106"/>
</dbReference>
<dbReference type="PDBsum" id="5IT7"/>
<dbReference type="PDBsum" id="6UZ7"/>
<dbReference type="EMDB" id="EMD-20952"/>
<dbReference type="EMDB" id="EMD-8123"/>
<dbReference type="SMR" id="P31027"/>
<dbReference type="FunCoup" id="P31027">
    <property type="interactions" value="735"/>
</dbReference>
<dbReference type="STRING" id="284590.P31027"/>
<dbReference type="PaxDb" id="284590-P31027"/>
<dbReference type="KEGG" id="kla:KLLA0_D07832g"/>
<dbReference type="eggNOG" id="KOG3464">
    <property type="taxonomic scope" value="Eukaryota"/>
</dbReference>
<dbReference type="HOGENOM" id="CLU_114645_2_1_1"/>
<dbReference type="InParanoid" id="P31027"/>
<dbReference type="OMA" id="CKKHTIH"/>
<dbReference type="Proteomes" id="UP000000598">
    <property type="component" value="Chromosome D"/>
</dbReference>
<dbReference type="GO" id="GO:1990904">
    <property type="term" value="C:ribonucleoprotein complex"/>
    <property type="evidence" value="ECO:0007669"/>
    <property type="project" value="UniProtKB-KW"/>
</dbReference>
<dbReference type="GO" id="GO:0005840">
    <property type="term" value="C:ribosome"/>
    <property type="evidence" value="ECO:0007669"/>
    <property type="project" value="UniProtKB-KW"/>
</dbReference>
<dbReference type="GO" id="GO:0003735">
    <property type="term" value="F:structural constituent of ribosome"/>
    <property type="evidence" value="ECO:0007669"/>
    <property type="project" value="InterPro"/>
</dbReference>
<dbReference type="GO" id="GO:0046677">
    <property type="term" value="P:response to antibiotic"/>
    <property type="evidence" value="ECO:0007669"/>
    <property type="project" value="UniProtKB-KW"/>
</dbReference>
<dbReference type="GO" id="GO:0046898">
    <property type="term" value="P:response to cycloheximide"/>
    <property type="evidence" value="ECO:0007669"/>
    <property type="project" value="UniProtKB-KW"/>
</dbReference>
<dbReference type="GO" id="GO:0006412">
    <property type="term" value="P:translation"/>
    <property type="evidence" value="ECO:0007669"/>
    <property type="project" value="InterPro"/>
</dbReference>
<dbReference type="FunFam" id="3.10.450.80:FF:000001">
    <property type="entry name" value="60S ribosomal protein L44"/>
    <property type="match status" value="1"/>
</dbReference>
<dbReference type="Gene3D" id="3.10.450.80">
    <property type="match status" value="1"/>
</dbReference>
<dbReference type="InterPro" id="IPR000552">
    <property type="entry name" value="Ribosomal_eL44"/>
</dbReference>
<dbReference type="InterPro" id="IPR053708">
    <property type="entry name" value="Ribosomal_LSU_eL42"/>
</dbReference>
<dbReference type="InterPro" id="IPR011332">
    <property type="entry name" value="Ribosomal_zn-bd"/>
</dbReference>
<dbReference type="PANTHER" id="PTHR10369">
    <property type="entry name" value="60S RIBOSOMAL PROTEIN L36A/L44"/>
    <property type="match status" value="1"/>
</dbReference>
<dbReference type="Pfam" id="PF00935">
    <property type="entry name" value="Ribosomal_L44"/>
    <property type="match status" value="1"/>
</dbReference>
<dbReference type="SUPFAM" id="SSF57829">
    <property type="entry name" value="Zn-binding ribosomal proteins"/>
    <property type="match status" value="1"/>
</dbReference>
<dbReference type="PROSITE" id="PS01172">
    <property type="entry name" value="RIBOSOMAL_L44E"/>
    <property type="match status" value="1"/>
</dbReference>
<keyword id="KW-0002">3D-structure</keyword>
<keyword id="KW-0046">Antibiotic resistance</keyword>
<keyword id="KW-0196">Cycloheximide resistance</keyword>
<keyword id="KW-1185">Reference proteome</keyword>
<keyword id="KW-0687">Ribonucleoprotein</keyword>
<keyword id="KW-0689">Ribosomal protein</keyword>
<organism>
    <name type="scientific">Kluyveromyces lactis (strain ATCC 8585 / CBS 2359 / DSM 70799 / NBRC 1267 / NRRL Y-1140 / WM37)</name>
    <name type="common">Yeast</name>
    <name type="synonym">Candida sphaerica</name>
    <dbReference type="NCBI Taxonomy" id="284590"/>
    <lineage>
        <taxon>Eukaryota</taxon>
        <taxon>Fungi</taxon>
        <taxon>Dikarya</taxon>
        <taxon>Ascomycota</taxon>
        <taxon>Saccharomycotina</taxon>
        <taxon>Saccharomycetes</taxon>
        <taxon>Saccharomycetales</taxon>
        <taxon>Saccharomycetaceae</taxon>
        <taxon>Kluyveromyces</taxon>
    </lineage>
</organism>
<feature type="initiator methionine" description="Removed" evidence="1">
    <location>
        <position position="1"/>
    </location>
</feature>
<feature type="chain" id="PRO_0000149139" description="Large ribosomal subunit protein eL42">
    <location>
        <begin position="2"/>
        <end position="106"/>
    </location>
</feature>
<gene>
    <name type="primary">RPL44</name>
    <name type="synonym">RPL41</name>
    <name type="ordered locus">KLLA0D07832g</name>
</gene>